<sequence length="167" mass="17603">MAHIEKQAGELQEKLIAVNRVSKTVKGGRIFSFTALTVVGDGNGRVGFGYGKAREVPAAIQKAMEKARRNMINVALNNGTLQHPVKGVHTGSRVFMQPASEGTGIIAGGAMRAVLEVAGVHNVLAKAYGSTNPINVVRATIDGLENMNSPEMVAAKRGKSVEEILGK</sequence>
<evidence type="ECO:0000255" key="1">
    <source>
        <dbReference type="HAMAP-Rule" id="MF_01307"/>
    </source>
</evidence>
<evidence type="ECO:0000305" key="2"/>
<keyword id="KW-0687">Ribonucleoprotein</keyword>
<keyword id="KW-0689">Ribosomal protein</keyword>
<keyword id="KW-0694">RNA-binding</keyword>
<keyword id="KW-0699">rRNA-binding</keyword>
<accession>Q0SZZ9</accession>
<organism>
    <name type="scientific">Shigella flexneri serotype 5b (strain 8401)</name>
    <dbReference type="NCBI Taxonomy" id="373384"/>
    <lineage>
        <taxon>Bacteria</taxon>
        <taxon>Pseudomonadati</taxon>
        <taxon>Pseudomonadota</taxon>
        <taxon>Gammaproteobacteria</taxon>
        <taxon>Enterobacterales</taxon>
        <taxon>Enterobacteriaceae</taxon>
        <taxon>Shigella</taxon>
    </lineage>
</organism>
<name>RS5_SHIF8</name>
<feature type="chain" id="PRO_1000086056" description="Small ribosomal subunit protein uS5">
    <location>
        <begin position="1"/>
        <end position="167"/>
    </location>
</feature>
<feature type="domain" description="S5 DRBM" evidence="1">
    <location>
        <begin position="11"/>
        <end position="74"/>
    </location>
</feature>
<reference key="1">
    <citation type="journal article" date="2006" name="BMC Genomics">
        <title>Complete genome sequence of Shigella flexneri 5b and comparison with Shigella flexneri 2a.</title>
        <authorList>
            <person name="Nie H."/>
            <person name="Yang F."/>
            <person name="Zhang X."/>
            <person name="Yang J."/>
            <person name="Chen L."/>
            <person name="Wang J."/>
            <person name="Xiong Z."/>
            <person name="Peng J."/>
            <person name="Sun L."/>
            <person name="Dong J."/>
            <person name="Xue Y."/>
            <person name="Xu X."/>
            <person name="Chen S."/>
            <person name="Yao Z."/>
            <person name="Shen Y."/>
            <person name="Jin Q."/>
        </authorList>
    </citation>
    <scope>NUCLEOTIDE SEQUENCE [LARGE SCALE GENOMIC DNA]</scope>
    <source>
        <strain>8401</strain>
    </source>
</reference>
<dbReference type="EMBL" id="CP000266">
    <property type="protein sequence ID" value="ABF05366.1"/>
    <property type="molecule type" value="Genomic_DNA"/>
</dbReference>
<dbReference type="RefSeq" id="WP_000940121.1">
    <property type="nucleotide sequence ID" value="NC_008258.1"/>
</dbReference>
<dbReference type="SMR" id="Q0SZZ9"/>
<dbReference type="GeneID" id="93778684"/>
<dbReference type="KEGG" id="sfv:SFV_3323"/>
<dbReference type="HOGENOM" id="CLU_065898_2_2_6"/>
<dbReference type="Proteomes" id="UP000000659">
    <property type="component" value="Chromosome"/>
</dbReference>
<dbReference type="GO" id="GO:0015935">
    <property type="term" value="C:small ribosomal subunit"/>
    <property type="evidence" value="ECO:0007669"/>
    <property type="project" value="InterPro"/>
</dbReference>
<dbReference type="GO" id="GO:0019843">
    <property type="term" value="F:rRNA binding"/>
    <property type="evidence" value="ECO:0007669"/>
    <property type="project" value="UniProtKB-UniRule"/>
</dbReference>
<dbReference type="GO" id="GO:0003735">
    <property type="term" value="F:structural constituent of ribosome"/>
    <property type="evidence" value="ECO:0007669"/>
    <property type="project" value="InterPro"/>
</dbReference>
<dbReference type="GO" id="GO:0006412">
    <property type="term" value="P:translation"/>
    <property type="evidence" value="ECO:0007669"/>
    <property type="project" value="UniProtKB-UniRule"/>
</dbReference>
<dbReference type="FunFam" id="3.30.160.20:FF:000001">
    <property type="entry name" value="30S ribosomal protein S5"/>
    <property type="match status" value="1"/>
</dbReference>
<dbReference type="FunFam" id="3.30.230.10:FF:000002">
    <property type="entry name" value="30S ribosomal protein S5"/>
    <property type="match status" value="1"/>
</dbReference>
<dbReference type="Gene3D" id="3.30.160.20">
    <property type="match status" value="1"/>
</dbReference>
<dbReference type="Gene3D" id="3.30.230.10">
    <property type="match status" value="1"/>
</dbReference>
<dbReference type="HAMAP" id="MF_01307_B">
    <property type="entry name" value="Ribosomal_uS5_B"/>
    <property type="match status" value="1"/>
</dbReference>
<dbReference type="InterPro" id="IPR020568">
    <property type="entry name" value="Ribosomal_Su5_D2-typ_SF"/>
</dbReference>
<dbReference type="InterPro" id="IPR000851">
    <property type="entry name" value="Ribosomal_uS5"/>
</dbReference>
<dbReference type="InterPro" id="IPR005712">
    <property type="entry name" value="Ribosomal_uS5_bac-type"/>
</dbReference>
<dbReference type="InterPro" id="IPR005324">
    <property type="entry name" value="Ribosomal_uS5_C"/>
</dbReference>
<dbReference type="InterPro" id="IPR013810">
    <property type="entry name" value="Ribosomal_uS5_N"/>
</dbReference>
<dbReference type="InterPro" id="IPR018192">
    <property type="entry name" value="Ribosomal_uS5_N_CS"/>
</dbReference>
<dbReference type="InterPro" id="IPR014721">
    <property type="entry name" value="Ribsml_uS5_D2-typ_fold_subgr"/>
</dbReference>
<dbReference type="NCBIfam" id="TIGR01021">
    <property type="entry name" value="rpsE_bact"/>
    <property type="match status" value="1"/>
</dbReference>
<dbReference type="PANTHER" id="PTHR48277">
    <property type="entry name" value="MITOCHONDRIAL RIBOSOMAL PROTEIN S5"/>
    <property type="match status" value="1"/>
</dbReference>
<dbReference type="PANTHER" id="PTHR48277:SF1">
    <property type="entry name" value="MITOCHONDRIAL RIBOSOMAL PROTEIN S5"/>
    <property type="match status" value="1"/>
</dbReference>
<dbReference type="Pfam" id="PF00333">
    <property type="entry name" value="Ribosomal_S5"/>
    <property type="match status" value="1"/>
</dbReference>
<dbReference type="Pfam" id="PF03719">
    <property type="entry name" value="Ribosomal_S5_C"/>
    <property type="match status" value="1"/>
</dbReference>
<dbReference type="SUPFAM" id="SSF54768">
    <property type="entry name" value="dsRNA-binding domain-like"/>
    <property type="match status" value="1"/>
</dbReference>
<dbReference type="SUPFAM" id="SSF54211">
    <property type="entry name" value="Ribosomal protein S5 domain 2-like"/>
    <property type="match status" value="1"/>
</dbReference>
<dbReference type="PROSITE" id="PS00585">
    <property type="entry name" value="RIBOSOMAL_S5"/>
    <property type="match status" value="1"/>
</dbReference>
<dbReference type="PROSITE" id="PS50881">
    <property type="entry name" value="S5_DSRBD"/>
    <property type="match status" value="1"/>
</dbReference>
<proteinExistence type="inferred from homology"/>
<gene>
    <name evidence="1" type="primary">rpsE</name>
    <name type="ordered locus">SFV_3323</name>
</gene>
<comment type="function">
    <text evidence="1">With S4 and S12 plays an important role in translational accuracy.</text>
</comment>
<comment type="function">
    <text evidence="1">Located at the back of the 30S subunit body where it stabilizes the conformation of the head with respect to the body.</text>
</comment>
<comment type="subunit">
    <text evidence="1">Part of the 30S ribosomal subunit. Contacts proteins S4 and S8.</text>
</comment>
<comment type="domain">
    <text>The N-terminal domain interacts with the head of the 30S subunit; the C-terminal domain interacts with the body and contacts protein S4. The interaction surface between S4 and S5 is involved in control of translational fidelity.</text>
</comment>
<comment type="similarity">
    <text evidence="1">Belongs to the universal ribosomal protein uS5 family.</text>
</comment>
<protein>
    <recommendedName>
        <fullName evidence="1">Small ribosomal subunit protein uS5</fullName>
    </recommendedName>
    <alternativeName>
        <fullName evidence="2">30S ribosomal protein S5</fullName>
    </alternativeName>
</protein>